<gene>
    <name type="primary">gatC</name>
    <name type="ordered locus">Cj0398</name>
</gene>
<protein>
    <recommendedName>
        <fullName>Glutamyl-tRNA(Gln) amidotransferase subunit C</fullName>
        <shortName>Glu-ADT subunit C</shortName>
        <ecNumber>6.3.5.-</ecNumber>
    </recommendedName>
</protein>
<sequence>MQIDEKLLSKLEKLSALQITKNRNETIAQLSEIVNFVEKLNELDLDSQEITVSTIKGGAPLRIDEIRNSNVIDEVLDCAPKKQEHFFVVPKIIE</sequence>
<evidence type="ECO:0000250" key="1"/>
<evidence type="ECO:0000305" key="2"/>
<name>GATC_CAMJE</name>
<organism>
    <name type="scientific">Campylobacter jejuni subsp. jejuni serotype O:2 (strain ATCC 700819 / NCTC 11168)</name>
    <dbReference type="NCBI Taxonomy" id="192222"/>
    <lineage>
        <taxon>Bacteria</taxon>
        <taxon>Pseudomonadati</taxon>
        <taxon>Campylobacterota</taxon>
        <taxon>Epsilonproteobacteria</taxon>
        <taxon>Campylobacterales</taxon>
        <taxon>Campylobacteraceae</taxon>
        <taxon>Campylobacter</taxon>
    </lineage>
</organism>
<comment type="function">
    <text evidence="1">Allows the formation of correctly charged Asn-tRNA(Asn) or Gln-tRNA(Gln) through the transamidation of misacylated Asp-tRNA(Asn) or Glu-tRNA(Gln) in organisms which lack either or both of asparaginyl-tRNA or glutaminyl-tRNA synthetases. The reaction takes place in the presence of glutamine and ATP through an activated phospho-Asp-tRNA(Asn) or phospho-Glu-tRNA(Gln) (By similarity).</text>
</comment>
<comment type="catalytic activity">
    <reaction>
        <text>L-glutamyl-tRNA(Gln) + L-glutamine + ATP + H2O = L-glutaminyl-tRNA(Gln) + L-glutamate + ADP + phosphate + H(+)</text>
        <dbReference type="Rhea" id="RHEA:17521"/>
        <dbReference type="Rhea" id="RHEA-COMP:9681"/>
        <dbReference type="Rhea" id="RHEA-COMP:9684"/>
        <dbReference type="ChEBI" id="CHEBI:15377"/>
        <dbReference type="ChEBI" id="CHEBI:15378"/>
        <dbReference type="ChEBI" id="CHEBI:29985"/>
        <dbReference type="ChEBI" id="CHEBI:30616"/>
        <dbReference type="ChEBI" id="CHEBI:43474"/>
        <dbReference type="ChEBI" id="CHEBI:58359"/>
        <dbReference type="ChEBI" id="CHEBI:78520"/>
        <dbReference type="ChEBI" id="CHEBI:78521"/>
        <dbReference type="ChEBI" id="CHEBI:456216"/>
    </reaction>
</comment>
<comment type="catalytic activity">
    <reaction>
        <text>L-aspartyl-tRNA(Asn) + L-glutamine + ATP + H2O = L-asparaginyl-tRNA(Asn) + L-glutamate + ADP + phosphate + 2 H(+)</text>
        <dbReference type="Rhea" id="RHEA:14513"/>
        <dbReference type="Rhea" id="RHEA-COMP:9674"/>
        <dbReference type="Rhea" id="RHEA-COMP:9677"/>
        <dbReference type="ChEBI" id="CHEBI:15377"/>
        <dbReference type="ChEBI" id="CHEBI:15378"/>
        <dbReference type="ChEBI" id="CHEBI:29985"/>
        <dbReference type="ChEBI" id="CHEBI:30616"/>
        <dbReference type="ChEBI" id="CHEBI:43474"/>
        <dbReference type="ChEBI" id="CHEBI:58359"/>
        <dbReference type="ChEBI" id="CHEBI:78515"/>
        <dbReference type="ChEBI" id="CHEBI:78516"/>
        <dbReference type="ChEBI" id="CHEBI:456216"/>
    </reaction>
</comment>
<comment type="subunit">
    <text evidence="1">Heterotrimer of A, B and C subunits.</text>
</comment>
<comment type="similarity">
    <text evidence="2">Belongs to the GatC family.</text>
</comment>
<reference key="1">
    <citation type="journal article" date="2000" name="Nature">
        <title>The genome sequence of the food-borne pathogen Campylobacter jejuni reveals hypervariable sequences.</title>
        <authorList>
            <person name="Parkhill J."/>
            <person name="Wren B.W."/>
            <person name="Mungall K.L."/>
            <person name="Ketley J.M."/>
            <person name="Churcher C.M."/>
            <person name="Basham D."/>
            <person name="Chillingworth T."/>
            <person name="Davies R.M."/>
            <person name="Feltwell T."/>
            <person name="Holroyd S."/>
            <person name="Jagels K."/>
            <person name="Karlyshev A.V."/>
            <person name="Moule S."/>
            <person name="Pallen M.J."/>
            <person name="Penn C.W."/>
            <person name="Quail M.A."/>
            <person name="Rajandream M.A."/>
            <person name="Rutherford K.M."/>
            <person name="van Vliet A.H.M."/>
            <person name="Whitehead S."/>
            <person name="Barrell B.G."/>
        </authorList>
    </citation>
    <scope>NUCLEOTIDE SEQUENCE [LARGE SCALE GENOMIC DNA]</scope>
    <source>
        <strain>ATCC 700819 / NCTC 11168</strain>
    </source>
</reference>
<feature type="chain" id="PRO_0000105285" description="Glutamyl-tRNA(Gln) amidotransferase subunit C">
    <location>
        <begin position="1"/>
        <end position="94"/>
    </location>
</feature>
<dbReference type="EC" id="6.3.5.-"/>
<dbReference type="EMBL" id="AL111168">
    <property type="protein sequence ID" value="CAL34548.1"/>
    <property type="molecule type" value="Genomic_DNA"/>
</dbReference>
<dbReference type="PIR" id="D81383">
    <property type="entry name" value="D81383"/>
</dbReference>
<dbReference type="RefSeq" id="WP_002858734.1">
    <property type="nucleotide sequence ID" value="NZ_SZUC01000004.1"/>
</dbReference>
<dbReference type="RefSeq" id="YP_002343835.1">
    <property type="nucleotide sequence ID" value="NC_002163.1"/>
</dbReference>
<dbReference type="SMR" id="Q9PIA5"/>
<dbReference type="IntAct" id="Q9PIA5">
    <property type="interactions" value="13"/>
</dbReference>
<dbReference type="STRING" id="192222.Cj0398"/>
<dbReference type="PaxDb" id="192222-Cj0398"/>
<dbReference type="EnsemblBacteria" id="CAL34548">
    <property type="protein sequence ID" value="CAL34548"/>
    <property type="gene ID" value="Cj0398"/>
</dbReference>
<dbReference type="GeneID" id="904721"/>
<dbReference type="KEGG" id="cje:Cj0398"/>
<dbReference type="PATRIC" id="fig|192222.6.peg.389"/>
<dbReference type="eggNOG" id="COG0721">
    <property type="taxonomic scope" value="Bacteria"/>
</dbReference>
<dbReference type="HOGENOM" id="CLU_105899_2_1_7"/>
<dbReference type="OrthoDB" id="9813938at2"/>
<dbReference type="Proteomes" id="UP000000799">
    <property type="component" value="Chromosome"/>
</dbReference>
<dbReference type="GO" id="GO:0050566">
    <property type="term" value="F:asparaginyl-tRNA synthase (glutamine-hydrolyzing) activity"/>
    <property type="evidence" value="ECO:0007669"/>
    <property type="project" value="RHEA"/>
</dbReference>
<dbReference type="GO" id="GO:0005524">
    <property type="term" value="F:ATP binding"/>
    <property type="evidence" value="ECO:0007669"/>
    <property type="project" value="UniProtKB-KW"/>
</dbReference>
<dbReference type="GO" id="GO:0050567">
    <property type="term" value="F:glutaminyl-tRNA synthase (glutamine-hydrolyzing) activity"/>
    <property type="evidence" value="ECO:0007669"/>
    <property type="project" value="UniProtKB-UniRule"/>
</dbReference>
<dbReference type="GO" id="GO:0070681">
    <property type="term" value="P:glutaminyl-tRNAGln biosynthesis via transamidation"/>
    <property type="evidence" value="ECO:0007669"/>
    <property type="project" value="TreeGrafter"/>
</dbReference>
<dbReference type="GO" id="GO:0006450">
    <property type="term" value="P:regulation of translational fidelity"/>
    <property type="evidence" value="ECO:0007669"/>
    <property type="project" value="InterPro"/>
</dbReference>
<dbReference type="GO" id="GO:0006412">
    <property type="term" value="P:translation"/>
    <property type="evidence" value="ECO:0007669"/>
    <property type="project" value="UniProtKB-UniRule"/>
</dbReference>
<dbReference type="Gene3D" id="1.10.20.60">
    <property type="entry name" value="Glu-tRNAGln amidotransferase C subunit, N-terminal domain"/>
    <property type="match status" value="1"/>
</dbReference>
<dbReference type="HAMAP" id="MF_00122">
    <property type="entry name" value="GatC"/>
    <property type="match status" value="1"/>
</dbReference>
<dbReference type="InterPro" id="IPR036113">
    <property type="entry name" value="Asp/Glu-ADT_sf_sub_c"/>
</dbReference>
<dbReference type="InterPro" id="IPR003837">
    <property type="entry name" value="GatC"/>
</dbReference>
<dbReference type="NCBIfam" id="TIGR00135">
    <property type="entry name" value="gatC"/>
    <property type="match status" value="1"/>
</dbReference>
<dbReference type="PANTHER" id="PTHR15004">
    <property type="entry name" value="GLUTAMYL-TRNA(GLN) AMIDOTRANSFERASE SUBUNIT C, MITOCHONDRIAL"/>
    <property type="match status" value="1"/>
</dbReference>
<dbReference type="PANTHER" id="PTHR15004:SF0">
    <property type="entry name" value="GLUTAMYL-TRNA(GLN) AMIDOTRANSFERASE SUBUNIT C, MITOCHONDRIAL"/>
    <property type="match status" value="1"/>
</dbReference>
<dbReference type="Pfam" id="PF02686">
    <property type="entry name" value="GatC"/>
    <property type="match status" value="1"/>
</dbReference>
<dbReference type="SUPFAM" id="SSF141000">
    <property type="entry name" value="Glu-tRNAGln amidotransferase C subunit"/>
    <property type="match status" value="1"/>
</dbReference>
<accession>Q9PIA5</accession>
<accession>Q0PBB2</accession>
<proteinExistence type="inferred from homology"/>
<keyword id="KW-0067">ATP-binding</keyword>
<keyword id="KW-0436">Ligase</keyword>
<keyword id="KW-0547">Nucleotide-binding</keyword>
<keyword id="KW-0648">Protein biosynthesis</keyword>
<keyword id="KW-1185">Reference proteome</keyword>